<name>MUTS_SHEPW</name>
<evidence type="ECO:0000255" key="1">
    <source>
        <dbReference type="HAMAP-Rule" id="MF_00096"/>
    </source>
</evidence>
<dbReference type="EMBL" id="CP000472">
    <property type="protein sequence ID" value="ACJ28152.1"/>
    <property type="molecule type" value="Genomic_DNA"/>
</dbReference>
<dbReference type="RefSeq" id="WP_020911530.1">
    <property type="nucleotide sequence ID" value="NC_011566.1"/>
</dbReference>
<dbReference type="SMR" id="B8CJQ5"/>
<dbReference type="STRING" id="225849.swp_1365"/>
<dbReference type="KEGG" id="swp:swp_1365"/>
<dbReference type="eggNOG" id="COG0249">
    <property type="taxonomic scope" value="Bacteria"/>
</dbReference>
<dbReference type="HOGENOM" id="CLU_002472_4_0_6"/>
<dbReference type="OrthoDB" id="9802448at2"/>
<dbReference type="Proteomes" id="UP000000753">
    <property type="component" value="Chromosome"/>
</dbReference>
<dbReference type="GO" id="GO:0005829">
    <property type="term" value="C:cytosol"/>
    <property type="evidence" value="ECO:0007669"/>
    <property type="project" value="TreeGrafter"/>
</dbReference>
<dbReference type="GO" id="GO:0005524">
    <property type="term" value="F:ATP binding"/>
    <property type="evidence" value="ECO:0007669"/>
    <property type="project" value="UniProtKB-UniRule"/>
</dbReference>
<dbReference type="GO" id="GO:0140664">
    <property type="term" value="F:ATP-dependent DNA damage sensor activity"/>
    <property type="evidence" value="ECO:0007669"/>
    <property type="project" value="InterPro"/>
</dbReference>
<dbReference type="GO" id="GO:0003684">
    <property type="term" value="F:damaged DNA binding"/>
    <property type="evidence" value="ECO:0007669"/>
    <property type="project" value="UniProtKB-UniRule"/>
</dbReference>
<dbReference type="GO" id="GO:0030983">
    <property type="term" value="F:mismatched DNA binding"/>
    <property type="evidence" value="ECO:0007669"/>
    <property type="project" value="InterPro"/>
</dbReference>
<dbReference type="GO" id="GO:0006298">
    <property type="term" value="P:mismatch repair"/>
    <property type="evidence" value="ECO:0007669"/>
    <property type="project" value="UniProtKB-UniRule"/>
</dbReference>
<dbReference type="CDD" id="cd03284">
    <property type="entry name" value="ABC_MutS1"/>
    <property type="match status" value="1"/>
</dbReference>
<dbReference type="FunFam" id="1.10.1420.10:FF:000002">
    <property type="entry name" value="DNA mismatch repair protein MutS"/>
    <property type="match status" value="1"/>
</dbReference>
<dbReference type="FunFam" id="3.30.420.110:FF:000001">
    <property type="entry name" value="DNA mismatch repair protein MutS"/>
    <property type="match status" value="1"/>
</dbReference>
<dbReference type="FunFam" id="3.40.1170.10:FF:000001">
    <property type="entry name" value="DNA mismatch repair protein MutS"/>
    <property type="match status" value="1"/>
</dbReference>
<dbReference type="FunFam" id="3.40.50.300:FF:000283">
    <property type="entry name" value="DNA mismatch repair protein MutS"/>
    <property type="match status" value="1"/>
</dbReference>
<dbReference type="Gene3D" id="1.10.1420.10">
    <property type="match status" value="2"/>
</dbReference>
<dbReference type="Gene3D" id="6.10.140.430">
    <property type="match status" value="1"/>
</dbReference>
<dbReference type="Gene3D" id="3.40.1170.10">
    <property type="entry name" value="DNA repair protein MutS, domain I"/>
    <property type="match status" value="1"/>
</dbReference>
<dbReference type="Gene3D" id="3.30.420.110">
    <property type="entry name" value="MutS, connector domain"/>
    <property type="match status" value="1"/>
</dbReference>
<dbReference type="Gene3D" id="3.40.50.300">
    <property type="entry name" value="P-loop containing nucleotide triphosphate hydrolases"/>
    <property type="match status" value="1"/>
</dbReference>
<dbReference type="HAMAP" id="MF_00096">
    <property type="entry name" value="MutS"/>
    <property type="match status" value="1"/>
</dbReference>
<dbReference type="InterPro" id="IPR005748">
    <property type="entry name" value="DNA_mismatch_repair_MutS"/>
</dbReference>
<dbReference type="InterPro" id="IPR007695">
    <property type="entry name" value="DNA_mismatch_repair_MutS-lik_N"/>
</dbReference>
<dbReference type="InterPro" id="IPR017261">
    <property type="entry name" value="DNA_mismatch_repair_MutS/MSH"/>
</dbReference>
<dbReference type="InterPro" id="IPR000432">
    <property type="entry name" value="DNA_mismatch_repair_MutS_C"/>
</dbReference>
<dbReference type="InterPro" id="IPR007861">
    <property type="entry name" value="DNA_mismatch_repair_MutS_clamp"/>
</dbReference>
<dbReference type="InterPro" id="IPR007696">
    <property type="entry name" value="DNA_mismatch_repair_MutS_core"/>
</dbReference>
<dbReference type="InterPro" id="IPR016151">
    <property type="entry name" value="DNA_mismatch_repair_MutS_N"/>
</dbReference>
<dbReference type="InterPro" id="IPR036187">
    <property type="entry name" value="DNA_mismatch_repair_MutS_sf"/>
</dbReference>
<dbReference type="InterPro" id="IPR007860">
    <property type="entry name" value="DNA_mmatch_repair_MutS_con_dom"/>
</dbReference>
<dbReference type="InterPro" id="IPR045076">
    <property type="entry name" value="MutS"/>
</dbReference>
<dbReference type="InterPro" id="IPR036678">
    <property type="entry name" value="MutS_con_dom_sf"/>
</dbReference>
<dbReference type="InterPro" id="IPR027417">
    <property type="entry name" value="P-loop_NTPase"/>
</dbReference>
<dbReference type="NCBIfam" id="TIGR01070">
    <property type="entry name" value="mutS1"/>
    <property type="match status" value="1"/>
</dbReference>
<dbReference type="NCBIfam" id="NF003810">
    <property type="entry name" value="PRK05399.1"/>
    <property type="match status" value="1"/>
</dbReference>
<dbReference type="PANTHER" id="PTHR11361:SF34">
    <property type="entry name" value="DNA MISMATCH REPAIR PROTEIN MSH1, MITOCHONDRIAL"/>
    <property type="match status" value="1"/>
</dbReference>
<dbReference type="PANTHER" id="PTHR11361">
    <property type="entry name" value="DNA MISMATCH REPAIR PROTEIN MUTS FAMILY MEMBER"/>
    <property type="match status" value="1"/>
</dbReference>
<dbReference type="Pfam" id="PF01624">
    <property type="entry name" value="MutS_I"/>
    <property type="match status" value="1"/>
</dbReference>
<dbReference type="Pfam" id="PF05188">
    <property type="entry name" value="MutS_II"/>
    <property type="match status" value="1"/>
</dbReference>
<dbReference type="Pfam" id="PF05192">
    <property type="entry name" value="MutS_III"/>
    <property type="match status" value="1"/>
</dbReference>
<dbReference type="Pfam" id="PF05190">
    <property type="entry name" value="MutS_IV"/>
    <property type="match status" value="1"/>
</dbReference>
<dbReference type="Pfam" id="PF00488">
    <property type="entry name" value="MutS_V"/>
    <property type="match status" value="1"/>
</dbReference>
<dbReference type="PIRSF" id="PIRSF037677">
    <property type="entry name" value="DNA_mis_repair_Msh6"/>
    <property type="match status" value="1"/>
</dbReference>
<dbReference type="SMART" id="SM00534">
    <property type="entry name" value="MUTSac"/>
    <property type="match status" value="1"/>
</dbReference>
<dbReference type="SMART" id="SM00533">
    <property type="entry name" value="MUTSd"/>
    <property type="match status" value="1"/>
</dbReference>
<dbReference type="SUPFAM" id="SSF55271">
    <property type="entry name" value="DNA repair protein MutS, domain I"/>
    <property type="match status" value="1"/>
</dbReference>
<dbReference type="SUPFAM" id="SSF53150">
    <property type="entry name" value="DNA repair protein MutS, domain II"/>
    <property type="match status" value="1"/>
</dbReference>
<dbReference type="SUPFAM" id="SSF48334">
    <property type="entry name" value="DNA repair protein MutS, domain III"/>
    <property type="match status" value="1"/>
</dbReference>
<dbReference type="SUPFAM" id="SSF52540">
    <property type="entry name" value="P-loop containing nucleoside triphosphate hydrolases"/>
    <property type="match status" value="1"/>
</dbReference>
<dbReference type="PROSITE" id="PS00486">
    <property type="entry name" value="DNA_MISMATCH_REPAIR_2"/>
    <property type="match status" value="1"/>
</dbReference>
<proteinExistence type="inferred from homology"/>
<feature type="chain" id="PRO_1000117292" description="DNA mismatch repair protein MutS">
    <location>
        <begin position="1"/>
        <end position="860"/>
    </location>
</feature>
<feature type="binding site" evidence="1">
    <location>
        <begin position="618"/>
        <end position="625"/>
    </location>
    <ligand>
        <name>ATP</name>
        <dbReference type="ChEBI" id="CHEBI:30616"/>
    </ligand>
</feature>
<gene>
    <name evidence="1" type="primary">mutS</name>
    <name type="ordered locus">swp_1365</name>
</gene>
<protein>
    <recommendedName>
        <fullName evidence="1">DNA mismatch repair protein MutS</fullName>
    </recommendedName>
</protein>
<keyword id="KW-0067">ATP-binding</keyword>
<keyword id="KW-0227">DNA damage</keyword>
<keyword id="KW-0234">DNA repair</keyword>
<keyword id="KW-0238">DNA-binding</keyword>
<keyword id="KW-0547">Nucleotide-binding</keyword>
<sequence length="860" mass="95624">MTAIEPQNLEKHTPMMRQYLTLKAQHPDMLLFYRMGDFYELFYEDAKLASELLGISLTARGKSGGDPIPMAGLPYHAVEGYLAKLVQLRVSVAICEQIGDPATSKGPVERKVVRIVTPGTLTDEALLQERQDNLLAALYQGKSGYGYATLDIASGRFVITELANTEALEAELQRTNPAELLYSEDFSQMSLIAGMNGTRRRPEWEFDFDTCQRLLLNQFGTKDLNGFGIEGARLSLQAAGCLMQYVKDTQRTALPHINSIVRFNQTDSIVLDAATRRNLELTVNLQGGHTNTLASVLDSTVTAMGSRMLQRWLHQPLRDHQVIKARQSSIAELIATENYQLLAEDLKALGDVERITARIALRNARPRDFARLRQALGLLPQLQQTLKASSEPHLQYLSQVIGEFPEELALLSRAVVDNPPMLIRDGGVIRDGYDAELDEWRVLSAGATDYLTQLEAREKEQTGISTLKVGYNRVHGYYIEVSRRESDLVPLSYQRRQTLKNTERYIIAELKEHEEKVLSSQGKALALEKQLWEELFDLILPKLHELQEFATAAAELDVLCNFAECAETLNYACPELSDASGIHVEAGRHPVVEQVSQSPFIANPVTLNSQRKMLIVTGPNMGGKSTYMRQIALITLMAHIGCYVPAEHAVIGPVDRIFTRIGASDDLASGRSTFMVEMTETANILHNATPNSLVLMDEIGRGTSTYDGLSLAWSAAEYLANNLNAMTLFATHYFELTQLPEQIKNVENVHLDAVEHGDSIVFMHAVQEGPASRSYGLQVAALAGVPNSVICAAKQKLHHLESRDHALEQSKNGEMAVQQTISFPTQPTSPVIEALEKLNPDELTPRQALDYLYNLKKMAR</sequence>
<organism>
    <name type="scientific">Shewanella piezotolerans (strain WP3 / JCM 13877)</name>
    <dbReference type="NCBI Taxonomy" id="225849"/>
    <lineage>
        <taxon>Bacteria</taxon>
        <taxon>Pseudomonadati</taxon>
        <taxon>Pseudomonadota</taxon>
        <taxon>Gammaproteobacteria</taxon>
        <taxon>Alteromonadales</taxon>
        <taxon>Shewanellaceae</taxon>
        <taxon>Shewanella</taxon>
    </lineage>
</organism>
<comment type="function">
    <text evidence="1">This protein is involved in the repair of mismatches in DNA. It is possible that it carries out the mismatch recognition step. This protein has a weak ATPase activity.</text>
</comment>
<comment type="similarity">
    <text evidence="1">Belongs to the DNA mismatch repair MutS family.</text>
</comment>
<accession>B8CJQ5</accession>
<reference key="1">
    <citation type="journal article" date="2008" name="PLoS ONE">
        <title>Environmental adaptation: genomic analysis of the piezotolerant and psychrotolerant deep-sea iron reducing bacterium Shewanella piezotolerans WP3.</title>
        <authorList>
            <person name="Wang F."/>
            <person name="Wang J."/>
            <person name="Jian H."/>
            <person name="Zhang B."/>
            <person name="Li S."/>
            <person name="Wang F."/>
            <person name="Zeng X."/>
            <person name="Gao L."/>
            <person name="Bartlett D.H."/>
            <person name="Yu J."/>
            <person name="Hu S."/>
            <person name="Xiao X."/>
        </authorList>
    </citation>
    <scope>NUCLEOTIDE SEQUENCE [LARGE SCALE GENOMIC DNA]</scope>
    <source>
        <strain>WP3 / JCM 13877</strain>
    </source>
</reference>